<reference key="1">
    <citation type="submission" date="2007-11" db="EMBL/GenBank/DDBJ databases">
        <authorList>
            <consortium name="The Salmonella enterica serovar Arizonae Genome Sequencing Project"/>
            <person name="McClelland M."/>
            <person name="Sanderson E.K."/>
            <person name="Porwollik S."/>
            <person name="Spieth J."/>
            <person name="Clifton W.S."/>
            <person name="Fulton R."/>
            <person name="Chunyan W."/>
            <person name="Wollam A."/>
            <person name="Shah N."/>
            <person name="Pepin K."/>
            <person name="Bhonagiri V."/>
            <person name="Nash W."/>
            <person name="Johnson M."/>
            <person name="Thiruvilangam P."/>
            <person name="Wilson R."/>
        </authorList>
    </citation>
    <scope>NUCLEOTIDE SEQUENCE [LARGE SCALE GENOMIC DNA]</scope>
    <source>
        <strain>ATCC BAA-731 / CDC346-86 / RSK2980</strain>
    </source>
</reference>
<protein>
    <recommendedName>
        <fullName evidence="1">Chaperone protein TorD</fullName>
    </recommendedName>
</protein>
<organism>
    <name type="scientific">Salmonella arizonae (strain ATCC BAA-731 / CDC346-86 / RSK2980)</name>
    <dbReference type="NCBI Taxonomy" id="41514"/>
    <lineage>
        <taxon>Bacteria</taxon>
        <taxon>Pseudomonadati</taxon>
        <taxon>Pseudomonadota</taxon>
        <taxon>Gammaproteobacteria</taxon>
        <taxon>Enterobacterales</taxon>
        <taxon>Enterobacteriaceae</taxon>
        <taxon>Salmonella</taxon>
    </lineage>
</organism>
<keyword id="KW-0143">Chaperone</keyword>
<keyword id="KW-0963">Cytoplasm</keyword>
<keyword id="KW-1185">Reference proteome</keyword>
<feature type="chain" id="PRO_1000085101" description="Chaperone protein TorD">
    <location>
        <begin position="1"/>
        <end position="210"/>
    </location>
</feature>
<accession>A9MJV6</accession>
<comment type="function">
    <text evidence="1">Involved in the biogenesis of TorA. Acts on TorA before the insertion of the molybdenum cofactor and, as a result, probably favors a conformation of the apoenzyme that is competent for acquiring the cofactor.</text>
</comment>
<comment type="subcellular location">
    <subcellularLocation>
        <location evidence="1">Cytoplasm</location>
    </subcellularLocation>
</comment>
<comment type="similarity">
    <text evidence="1">Belongs to the TorD/DmsD family. TorD subfamily.</text>
</comment>
<dbReference type="EMBL" id="CP000880">
    <property type="protein sequence ID" value="ABX23617.1"/>
    <property type="molecule type" value="Genomic_DNA"/>
</dbReference>
<dbReference type="SMR" id="A9MJV6"/>
<dbReference type="STRING" id="41514.SARI_03823"/>
<dbReference type="KEGG" id="ses:SARI_03823"/>
<dbReference type="HOGENOM" id="CLU_077650_4_0_6"/>
<dbReference type="Proteomes" id="UP000002084">
    <property type="component" value="Chromosome"/>
</dbReference>
<dbReference type="GO" id="GO:0005737">
    <property type="term" value="C:cytoplasm"/>
    <property type="evidence" value="ECO:0007669"/>
    <property type="project" value="UniProtKB-SubCell"/>
</dbReference>
<dbReference type="GO" id="GO:0051259">
    <property type="term" value="P:protein complex oligomerization"/>
    <property type="evidence" value="ECO:0007669"/>
    <property type="project" value="InterPro"/>
</dbReference>
<dbReference type="GO" id="GO:0006457">
    <property type="term" value="P:protein folding"/>
    <property type="evidence" value="ECO:0007669"/>
    <property type="project" value="UniProtKB-UniRule"/>
</dbReference>
<dbReference type="Gene3D" id="1.20.120.1820">
    <property type="match status" value="1"/>
</dbReference>
<dbReference type="Gene3D" id="1.20.1280.20">
    <property type="entry name" value="HscB, C-terminal domain"/>
    <property type="match status" value="1"/>
</dbReference>
<dbReference type="HAMAP" id="MF_01150">
    <property type="entry name" value="TorD"/>
    <property type="match status" value="1"/>
</dbReference>
<dbReference type="InterPro" id="IPR023069">
    <property type="entry name" value="Chaperone_TorD"/>
</dbReference>
<dbReference type="InterPro" id="IPR020945">
    <property type="entry name" value="DMSO/NO3_reduct_chaperone"/>
</dbReference>
<dbReference type="InterPro" id="IPR036386">
    <property type="entry name" value="HscB_C_sf"/>
</dbReference>
<dbReference type="InterPro" id="IPR036411">
    <property type="entry name" value="TorD-like_sf"/>
</dbReference>
<dbReference type="InterPro" id="IPR050289">
    <property type="entry name" value="TorD/DmsD_chaperones"/>
</dbReference>
<dbReference type="NCBIfam" id="NF003442">
    <property type="entry name" value="PRK04976.1"/>
    <property type="match status" value="1"/>
</dbReference>
<dbReference type="PANTHER" id="PTHR34227:SF11">
    <property type="entry name" value="CHAPERONE PROTEIN TORD"/>
    <property type="match status" value="1"/>
</dbReference>
<dbReference type="PANTHER" id="PTHR34227">
    <property type="entry name" value="CHAPERONE PROTEIN YCDY"/>
    <property type="match status" value="1"/>
</dbReference>
<dbReference type="Pfam" id="PF02613">
    <property type="entry name" value="Nitrate_red_del"/>
    <property type="match status" value="1"/>
</dbReference>
<dbReference type="SUPFAM" id="SSF89155">
    <property type="entry name" value="TorD-like"/>
    <property type="match status" value="1"/>
</dbReference>
<evidence type="ECO:0000255" key="1">
    <source>
        <dbReference type="HAMAP-Rule" id="MF_01150"/>
    </source>
</evidence>
<proteinExistence type="inferred from homology"/>
<gene>
    <name evidence="1" type="primary">torD</name>
    <name type="ordered locus">SARI_03823</name>
</gene>
<name>TORD_SALAR</name>
<sequence length="210" mass="23851">MIKQPALAQEQYACVYAWLALLFFREVDDEGLMQLQSAEIADWLALLKRQPALTASVAQLEQKIAALRQRQDAQLELAADFCGLFLMTDKKSALPYASQYLQKEPGMIKHLLLEAGMDVNDGFKEPTDHLAIYLELLSHLHFSLGESFQQRRMNKLRQKTLSSLLEWLPEFTNNCVKHDPYGFYAALSQLLLAIVRFDDGEEDFPIVAAG</sequence>